<accession>Q9I742</accession>
<sequence length="902" mass="98738">MSEISRVALFGKLNSLAYKAIEAATVFCKLRGNPYVELVHWFHQILQLPDSDLHQIVRQSGIDPARLAKDLTEALDRLPRGSTSITDLSSHVEEAVERGWVYGSLMFGESQVRTGYLVIGILKTPSLRHALTGLSAEFAKLKVEALTERFDEYVGASPENGLSASDGFNAGAAPGEASGALAPSAMGKQEALKRFTVDLTEQARSGKLDPIVGRDEEIRQLVDILMRRRQNNPILTGEAGVGKTAVVEGFALRIVAGDVPPALKDVELRALDVGLLQAGASMKGEFEQRLRQVIEDVQSSEKPIILFIDEAHTLVGAGGAAGTGDAANLLKPALARGTLRTVAATTWAEYKKHIEKDPALTRRFQVVQVDEPSEHKAILMMRGVASTMEKHHQVQILDEALEAAVRLSHRYIPARQLPDKSVSLLDTACARTAISLHAVPAEVDDSRRRIEALETELAIIRRESAIGVATAERQRNAETLLAEERERLAALEQRWAEEKRLVDELLETRARLRAAAEAVDAGGVPLGEGEVRLDEEQRQALHARLAELQAQLSALQGEEPLILPTVDYQAVASVVADWTGIPVGRMARNEIETVLNLDRHLKKRIIGQDHALEMIAKRIQTSRAGLDNPSKPIGVFMLAGTSGVGKTETALALAEAMYGGEQNVITINMSEFQEAHTVSTLKGAPPGYIGYGEGGVLTEAVRRKPYSVVLLDEVEKAHPDVHEIFFQVFDKGVMEDGEGRVIDFKNTLILLTTNAGTEMIASLCADPELMPEPEAIAKSLREPLLKIFPPALLGRLVTIPYYPLSDDMLKAISRLQLGRIKKRVEATHKVPFEFDEGVVDLIVSRCTETESGGRMIDAILTNTLLPDMSREFLTRMLEGKPLAGVRISSRDNQFHYDFAEAE</sequence>
<feature type="chain" id="PRO_0000250989" description="AAA+ ATPase ClpV1">
    <location>
        <begin position="1"/>
        <end position="902"/>
    </location>
</feature>
<feature type="domain" description="Clp R" evidence="3">
    <location>
        <begin position="10"/>
        <end position="151"/>
    </location>
</feature>
<feature type="region of interest" description="Repeat 1" evidence="3">
    <location>
        <begin position="13"/>
        <end position="78"/>
    </location>
</feature>
<feature type="region of interest" description="Repeat 2" evidence="3">
    <location>
        <begin position="88"/>
        <end position="151"/>
    </location>
</feature>
<feature type="coiled-coil region" evidence="2">
    <location>
        <begin position="441"/>
        <end position="559"/>
    </location>
</feature>
<feature type="binding site" evidence="1">
    <location>
        <begin position="237"/>
        <end position="244"/>
    </location>
    <ligand>
        <name>ATP</name>
        <dbReference type="ChEBI" id="CHEBI:30616"/>
        <label>1</label>
    </ligand>
</feature>
<feature type="binding site" evidence="1">
    <location>
        <begin position="640"/>
        <end position="647"/>
    </location>
    <ligand>
        <name>ATP</name>
        <dbReference type="ChEBI" id="CHEBI:30616"/>
        <label>2</label>
    </ligand>
</feature>
<feature type="mutagenesis site" description="Loss of ATP hydrolytic activity and hcp1 secretion." evidence="4">
    <original>E</original>
    <variation>A</variation>
    <location>
        <position position="310"/>
    </location>
</feature>
<feature type="helix" evidence="7">
    <location>
        <begin position="6"/>
        <end position="10"/>
    </location>
</feature>
<feature type="helix" evidence="7">
    <location>
        <begin position="15"/>
        <end position="31"/>
    </location>
</feature>
<feature type="strand" evidence="7">
    <location>
        <begin position="34"/>
        <end position="36"/>
    </location>
</feature>
<feature type="helix" evidence="7">
    <location>
        <begin position="38"/>
        <end position="47"/>
    </location>
</feature>
<feature type="helix" evidence="7">
    <location>
        <begin position="52"/>
        <end position="59"/>
    </location>
</feature>
<feature type="helix" evidence="7">
    <location>
        <begin position="64"/>
        <end position="77"/>
    </location>
</feature>
<feature type="helix" evidence="7">
    <location>
        <begin position="90"/>
        <end position="105"/>
    </location>
</feature>
<feature type="strand" evidence="7">
    <location>
        <begin position="110"/>
        <end position="112"/>
    </location>
</feature>
<feature type="helix" evidence="7">
    <location>
        <begin position="114"/>
        <end position="122"/>
    </location>
</feature>
<feature type="helix" evidence="7">
    <location>
        <begin position="125"/>
        <end position="134"/>
    </location>
</feature>
<feature type="helix" evidence="7">
    <location>
        <begin position="136"/>
        <end position="140"/>
    </location>
</feature>
<feature type="helix" evidence="7">
    <location>
        <begin position="143"/>
        <end position="148"/>
    </location>
</feature>
<feature type="helix" evidence="7">
    <location>
        <begin position="150"/>
        <end position="154"/>
    </location>
</feature>
<gene>
    <name type="primary">clpV1</name>
    <name type="ordered locus">PA0090</name>
</gene>
<organism>
    <name type="scientific">Pseudomonas aeruginosa (strain ATCC 15692 / DSM 22644 / CIP 104116 / JCM 14847 / LMG 12228 / 1C / PRS 101 / PAO1)</name>
    <dbReference type="NCBI Taxonomy" id="208964"/>
    <lineage>
        <taxon>Bacteria</taxon>
        <taxon>Pseudomonadati</taxon>
        <taxon>Pseudomonadota</taxon>
        <taxon>Gammaproteobacteria</taxon>
        <taxon>Pseudomonadales</taxon>
        <taxon>Pseudomonadaceae</taxon>
        <taxon>Pseudomonas</taxon>
    </lineage>
</organism>
<reference key="1">
    <citation type="journal article" date="2000" name="Nature">
        <title>Complete genome sequence of Pseudomonas aeruginosa PAO1, an opportunistic pathogen.</title>
        <authorList>
            <person name="Stover C.K."/>
            <person name="Pham X.-Q.T."/>
            <person name="Erwin A.L."/>
            <person name="Mizoguchi S.D."/>
            <person name="Warrener P."/>
            <person name="Hickey M.J."/>
            <person name="Brinkman F.S.L."/>
            <person name="Hufnagle W.O."/>
            <person name="Kowalik D.J."/>
            <person name="Lagrou M."/>
            <person name="Garber R.L."/>
            <person name="Goltry L."/>
            <person name="Tolentino E."/>
            <person name="Westbrock-Wadman S."/>
            <person name="Yuan Y."/>
            <person name="Brody L.L."/>
            <person name="Coulter S.N."/>
            <person name="Folger K.R."/>
            <person name="Kas A."/>
            <person name="Larbig K."/>
            <person name="Lim R.M."/>
            <person name="Smith K.A."/>
            <person name="Spencer D.H."/>
            <person name="Wong G.K.-S."/>
            <person name="Wu Z."/>
            <person name="Paulsen I.T."/>
            <person name="Reizer J."/>
            <person name="Saier M.H. Jr."/>
            <person name="Hancock R.E.W."/>
            <person name="Lory S."/>
            <person name="Olson M.V."/>
        </authorList>
    </citation>
    <scope>NUCLEOTIDE SEQUENCE [LARGE SCALE GENOMIC DNA]</scope>
    <source>
        <strain>ATCC 15692 / DSM 22644 / CIP 104116 / JCM 14847 / LMG 12228 / 1C / PRS 101 / PAO1</strain>
    </source>
</reference>
<reference key="2">
    <citation type="journal article" date="2006" name="Science">
        <title>A virulence locus of Pseudomonas aeruginosa encodes a protein secretion apparatus.</title>
        <authorList>
            <person name="Mougous J.D."/>
            <person name="Cuff M.E."/>
            <person name="Raunser S."/>
            <person name="Shen A."/>
            <person name="Zhou M."/>
            <person name="Gifford C.A."/>
            <person name="Goodman A.L."/>
            <person name="Joachimiak G."/>
            <person name="Ordonez C.L."/>
            <person name="Lory S."/>
            <person name="Walz T."/>
            <person name="Joachimiak A."/>
            <person name="Mekalanos J.J."/>
        </authorList>
    </citation>
    <scope>FUNCTION</scope>
    <scope>SUBCELLULAR LOCATION</scope>
    <scope>MUTAGENESIS OF GLU-310</scope>
    <source>
        <strain>ATCC 15692 / DSM 22644 / CIP 104116 / JCM 14847 / LMG 12228 / 1C / PRS 101 / PAO1</strain>
    </source>
</reference>
<reference key="3">
    <citation type="journal article" date="2014" name="J. Biol. Chem.">
        <title>Coevolution of the ATPase ClpV, the sheath proteins TssB and TssC, and the accessory protein TagJ/HsiE1 distinguishes type VI secretion classes.</title>
        <authorList>
            <person name="Foerster A."/>
            <person name="Planamente S."/>
            <person name="Manoli E."/>
            <person name="Lossi N.S."/>
            <person name="Freemont P.S."/>
            <person name="Filloux A."/>
        </authorList>
    </citation>
    <scope>X-RAY CRYSTALLOGRAPHY (1.50 ANGSTROMS) OF 1-161</scope>
    <scope>INTERACTION WITH TAGJ</scope>
    <scope>FUNCTION</scope>
</reference>
<protein>
    <recommendedName>
        <fullName>AAA+ ATPase ClpV1</fullName>
    </recommendedName>
</protein>
<name>CLPV1_PSEAE</name>
<keyword id="KW-0002">3D-structure</keyword>
<keyword id="KW-0067">ATP-binding</keyword>
<keyword id="KW-0143">Chaperone</keyword>
<keyword id="KW-0175">Coiled coil</keyword>
<keyword id="KW-0963">Cytoplasm</keyword>
<keyword id="KW-0547">Nucleotide-binding</keyword>
<keyword id="KW-1185">Reference proteome</keyword>
<keyword id="KW-0677">Repeat</keyword>
<evidence type="ECO:0000250" key="1"/>
<evidence type="ECO:0000255" key="2"/>
<evidence type="ECO:0000255" key="3">
    <source>
        <dbReference type="PROSITE-ProRule" id="PRU01251"/>
    </source>
</evidence>
<evidence type="ECO:0000269" key="4">
    <source>
    </source>
</evidence>
<evidence type="ECO:0000269" key="5">
    <source>
    </source>
</evidence>
<evidence type="ECO:0000305" key="6"/>
<evidence type="ECO:0007829" key="7">
    <source>
        <dbReference type="PDB" id="4UQW"/>
    </source>
</evidence>
<proteinExistence type="evidence at protein level"/>
<dbReference type="EMBL" id="AE004091">
    <property type="protein sequence ID" value="AAG03480.1"/>
    <property type="molecule type" value="Genomic_DNA"/>
</dbReference>
<dbReference type="PIR" id="G83635">
    <property type="entry name" value="G83635"/>
</dbReference>
<dbReference type="RefSeq" id="NP_248780.1">
    <property type="nucleotide sequence ID" value="NC_002516.2"/>
</dbReference>
<dbReference type="PDB" id="4UQW">
    <property type="method" value="X-ray"/>
    <property type="resolution" value="1.50 A"/>
    <property type="chains" value="A/B=1-161"/>
</dbReference>
<dbReference type="PDBsum" id="4UQW"/>
<dbReference type="SMR" id="Q9I742"/>
<dbReference type="IntAct" id="Q9I742">
    <property type="interactions" value="1"/>
</dbReference>
<dbReference type="STRING" id="208964.PA0090"/>
<dbReference type="PaxDb" id="208964-PA0090"/>
<dbReference type="GeneID" id="879553"/>
<dbReference type="KEGG" id="pae:PA0090"/>
<dbReference type="PATRIC" id="fig|208964.12.peg.94"/>
<dbReference type="PseudoCAP" id="PA0090"/>
<dbReference type="HOGENOM" id="CLU_005070_1_1_6"/>
<dbReference type="InParanoid" id="Q9I742"/>
<dbReference type="OrthoDB" id="9803641at2"/>
<dbReference type="PhylomeDB" id="Q9I742"/>
<dbReference type="BioCyc" id="PAER208964:G1FZ6-92-MONOMER"/>
<dbReference type="EvolutionaryTrace" id="Q9I742"/>
<dbReference type="Proteomes" id="UP000002438">
    <property type="component" value="Chromosome"/>
</dbReference>
<dbReference type="GO" id="GO:0005737">
    <property type="term" value="C:cytoplasm"/>
    <property type="evidence" value="ECO:0007669"/>
    <property type="project" value="UniProtKB-SubCell"/>
</dbReference>
<dbReference type="GO" id="GO:0005524">
    <property type="term" value="F:ATP binding"/>
    <property type="evidence" value="ECO:0007669"/>
    <property type="project" value="UniProtKB-KW"/>
</dbReference>
<dbReference type="GO" id="GO:0016887">
    <property type="term" value="F:ATP hydrolysis activity"/>
    <property type="evidence" value="ECO:0007669"/>
    <property type="project" value="InterPro"/>
</dbReference>
<dbReference type="CDD" id="cd00009">
    <property type="entry name" value="AAA"/>
    <property type="match status" value="1"/>
</dbReference>
<dbReference type="CDD" id="cd19499">
    <property type="entry name" value="RecA-like_ClpB_Hsp104-like"/>
    <property type="match status" value="1"/>
</dbReference>
<dbReference type="FunFam" id="3.40.50.300:FF:000025">
    <property type="entry name" value="ATP-dependent Clp protease subunit"/>
    <property type="match status" value="1"/>
</dbReference>
<dbReference type="FunFam" id="3.40.50.300:FF:000010">
    <property type="entry name" value="Chaperone clpB 1, putative"/>
    <property type="match status" value="1"/>
</dbReference>
<dbReference type="Gene3D" id="1.10.8.60">
    <property type="match status" value="1"/>
</dbReference>
<dbReference type="Gene3D" id="1.10.1780.10">
    <property type="entry name" value="Clp, N-terminal domain"/>
    <property type="match status" value="1"/>
</dbReference>
<dbReference type="Gene3D" id="3.40.50.300">
    <property type="entry name" value="P-loop containing nucleotide triphosphate hydrolases"/>
    <property type="match status" value="3"/>
</dbReference>
<dbReference type="InterPro" id="IPR003593">
    <property type="entry name" value="AAA+_ATPase"/>
</dbReference>
<dbReference type="InterPro" id="IPR003959">
    <property type="entry name" value="ATPase_AAA_core"/>
</dbReference>
<dbReference type="InterPro" id="IPR017729">
    <property type="entry name" value="ATPase_T6SS_ClpV1"/>
</dbReference>
<dbReference type="InterPro" id="IPR019489">
    <property type="entry name" value="Clp_ATPase_C"/>
</dbReference>
<dbReference type="InterPro" id="IPR036628">
    <property type="entry name" value="Clp_N_dom_sf"/>
</dbReference>
<dbReference type="InterPro" id="IPR004176">
    <property type="entry name" value="Clp_R_dom"/>
</dbReference>
<dbReference type="InterPro" id="IPR001270">
    <property type="entry name" value="ClpA/B"/>
</dbReference>
<dbReference type="InterPro" id="IPR018368">
    <property type="entry name" value="ClpA/B_CS1"/>
</dbReference>
<dbReference type="InterPro" id="IPR041546">
    <property type="entry name" value="ClpA/ClpB_AAA_lid"/>
</dbReference>
<dbReference type="InterPro" id="IPR050130">
    <property type="entry name" value="ClpA_ClpB"/>
</dbReference>
<dbReference type="InterPro" id="IPR027417">
    <property type="entry name" value="P-loop_NTPase"/>
</dbReference>
<dbReference type="NCBIfam" id="TIGR03345">
    <property type="entry name" value="VI_ClpV1"/>
    <property type="match status" value="1"/>
</dbReference>
<dbReference type="PANTHER" id="PTHR11638">
    <property type="entry name" value="ATP-DEPENDENT CLP PROTEASE"/>
    <property type="match status" value="1"/>
</dbReference>
<dbReference type="PANTHER" id="PTHR11638:SF184">
    <property type="entry name" value="ATPASE WITH CHAPERONE ACTIVITY"/>
    <property type="match status" value="1"/>
</dbReference>
<dbReference type="Pfam" id="PF00004">
    <property type="entry name" value="AAA"/>
    <property type="match status" value="1"/>
</dbReference>
<dbReference type="Pfam" id="PF07724">
    <property type="entry name" value="AAA_2"/>
    <property type="match status" value="1"/>
</dbReference>
<dbReference type="Pfam" id="PF17871">
    <property type="entry name" value="AAA_lid_9"/>
    <property type="match status" value="1"/>
</dbReference>
<dbReference type="Pfam" id="PF10431">
    <property type="entry name" value="ClpB_D2-small"/>
    <property type="match status" value="1"/>
</dbReference>
<dbReference type="PRINTS" id="PR00300">
    <property type="entry name" value="CLPPROTEASEA"/>
</dbReference>
<dbReference type="SMART" id="SM00382">
    <property type="entry name" value="AAA"/>
    <property type="match status" value="2"/>
</dbReference>
<dbReference type="SMART" id="SM01086">
    <property type="entry name" value="ClpB_D2-small"/>
    <property type="match status" value="1"/>
</dbReference>
<dbReference type="SUPFAM" id="SSF81923">
    <property type="entry name" value="Double Clp-N motif"/>
    <property type="match status" value="1"/>
</dbReference>
<dbReference type="SUPFAM" id="SSF52540">
    <property type="entry name" value="P-loop containing nucleoside triphosphate hydrolases"/>
    <property type="match status" value="2"/>
</dbReference>
<dbReference type="PROSITE" id="PS51903">
    <property type="entry name" value="CLP_R"/>
    <property type="match status" value="1"/>
</dbReference>
<dbReference type="PROSITE" id="PS00870">
    <property type="entry name" value="CLPAB_1"/>
    <property type="match status" value="1"/>
</dbReference>
<comment type="function">
    <text evidence="4 5">Component of the H1 type VI (H1-T6SS) secretion system that plays a role in the release of toxins targeting both eukaryotic and prokaryotic species. Acts as an AAA(+) ATPase that disassembles the contracted sheath, which resets the systems for reassembly of an extended sheath that is ready to fire again.</text>
</comment>
<comment type="subunit">
    <text evidence="5">Interacts with TagJ.</text>
</comment>
<comment type="subcellular location">
    <subcellularLocation>
        <location evidence="4">Cytoplasm</location>
    </subcellularLocation>
</comment>
<comment type="similarity">
    <text evidence="6">Belongs to the ClpA/ClpB family.</text>
</comment>